<dbReference type="EMBL" id="CR762174">
    <property type="protein sequence ID" value="CAJ83519.1"/>
    <property type="molecule type" value="mRNA"/>
</dbReference>
<dbReference type="RefSeq" id="NP_001017017.1">
    <property type="nucleotide sequence ID" value="NM_001017017.2"/>
</dbReference>
<dbReference type="SMR" id="Q28F43"/>
<dbReference type="GeneID" id="549771"/>
<dbReference type="KEGG" id="xtr:549771"/>
<dbReference type="AGR" id="Xenbase:XB-GENE-952918"/>
<dbReference type="CTD" id="3344"/>
<dbReference type="Xenbase" id="XB-GENE-952918">
    <property type="gene designation" value="foxn2"/>
</dbReference>
<dbReference type="eggNOG" id="KOG2294">
    <property type="taxonomic scope" value="Eukaryota"/>
</dbReference>
<dbReference type="InParanoid" id="Q28F43"/>
<dbReference type="OMA" id="GYVSQPC"/>
<dbReference type="OrthoDB" id="5954824at2759"/>
<dbReference type="Proteomes" id="UP000008143">
    <property type="component" value="Chromosome 5"/>
</dbReference>
<dbReference type="GO" id="GO:0005634">
    <property type="term" value="C:nucleus"/>
    <property type="evidence" value="ECO:0007669"/>
    <property type="project" value="UniProtKB-SubCell"/>
</dbReference>
<dbReference type="GO" id="GO:0003700">
    <property type="term" value="F:DNA-binding transcription factor activity"/>
    <property type="evidence" value="ECO:0007669"/>
    <property type="project" value="InterPro"/>
</dbReference>
<dbReference type="GO" id="GO:0043565">
    <property type="term" value="F:sequence-specific DNA binding"/>
    <property type="evidence" value="ECO:0007669"/>
    <property type="project" value="InterPro"/>
</dbReference>
<dbReference type="CDD" id="cd20058">
    <property type="entry name" value="FH_FOXN2"/>
    <property type="match status" value="1"/>
</dbReference>
<dbReference type="Gene3D" id="1.10.10.10">
    <property type="entry name" value="Winged helix-like DNA-binding domain superfamily/Winged helix DNA-binding domain"/>
    <property type="match status" value="1"/>
</dbReference>
<dbReference type="InterPro" id="IPR047403">
    <property type="entry name" value="FH_FOXN2"/>
</dbReference>
<dbReference type="InterPro" id="IPR001766">
    <property type="entry name" value="Fork_head_dom"/>
</dbReference>
<dbReference type="InterPro" id="IPR047119">
    <property type="entry name" value="FOXN2/3-like"/>
</dbReference>
<dbReference type="InterPro" id="IPR018122">
    <property type="entry name" value="TF_fork_head_CS_1"/>
</dbReference>
<dbReference type="InterPro" id="IPR030456">
    <property type="entry name" value="TF_fork_head_CS_2"/>
</dbReference>
<dbReference type="InterPro" id="IPR036388">
    <property type="entry name" value="WH-like_DNA-bd_sf"/>
</dbReference>
<dbReference type="InterPro" id="IPR036390">
    <property type="entry name" value="WH_DNA-bd_sf"/>
</dbReference>
<dbReference type="PANTHER" id="PTHR13962:SF19">
    <property type="entry name" value="FORKHEAD BOX PROTEIN N2"/>
    <property type="match status" value="1"/>
</dbReference>
<dbReference type="PANTHER" id="PTHR13962">
    <property type="entry name" value="FORKHEAD BOX PROTEIN N3-LIKE PROTEIN-RELATED"/>
    <property type="match status" value="1"/>
</dbReference>
<dbReference type="Pfam" id="PF00250">
    <property type="entry name" value="Forkhead"/>
    <property type="match status" value="1"/>
</dbReference>
<dbReference type="PRINTS" id="PR00053">
    <property type="entry name" value="FORKHEAD"/>
</dbReference>
<dbReference type="SMART" id="SM00339">
    <property type="entry name" value="FH"/>
    <property type="match status" value="1"/>
</dbReference>
<dbReference type="SUPFAM" id="SSF46785">
    <property type="entry name" value="Winged helix' DNA-binding domain"/>
    <property type="match status" value="1"/>
</dbReference>
<dbReference type="PROSITE" id="PS00657">
    <property type="entry name" value="FORK_HEAD_1"/>
    <property type="match status" value="1"/>
</dbReference>
<dbReference type="PROSITE" id="PS00658">
    <property type="entry name" value="FORK_HEAD_2"/>
    <property type="match status" value="1"/>
</dbReference>
<dbReference type="PROSITE" id="PS50039">
    <property type="entry name" value="FORK_HEAD_3"/>
    <property type="match status" value="1"/>
</dbReference>
<feature type="chain" id="PRO_0000247733" description="Forkhead box protein N2">
    <location>
        <begin position="1"/>
        <end position="334"/>
    </location>
</feature>
<feature type="DNA-binding region" description="Fork-head" evidence="2">
    <location>
        <begin position="108"/>
        <end position="204"/>
    </location>
</feature>
<feature type="region of interest" description="Disordered" evidence="3">
    <location>
        <begin position="1"/>
        <end position="52"/>
    </location>
</feature>
<feature type="region of interest" description="Disordered" evidence="3">
    <location>
        <begin position="83"/>
        <end position="108"/>
    </location>
</feature>
<evidence type="ECO:0000250" key="1">
    <source>
        <dbReference type="UniProtKB" id="Q66J77"/>
    </source>
</evidence>
<evidence type="ECO:0000255" key="2">
    <source>
        <dbReference type="PROSITE-ProRule" id="PRU00089"/>
    </source>
</evidence>
<evidence type="ECO:0000256" key="3">
    <source>
        <dbReference type="SAM" id="MobiDB-lite"/>
    </source>
</evidence>
<evidence type="ECO:0000305" key="4"/>
<evidence type="ECO:0000312" key="5">
    <source>
        <dbReference type="EMBL" id="CAJ83519.1"/>
    </source>
</evidence>
<keyword id="KW-0238">DNA-binding</keyword>
<keyword id="KW-0539">Nucleus</keyword>
<keyword id="KW-1185">Reference proteome</keyword>
<keyword id="KW-0804">Transcription</keyword>
<keyword id="KW-0805">Transcription regulation</keyword>
<gene>
    <name evidence="1" type="primary">foxn2</name>
    <name type="ORF">TGas051c08.1</name>
</gene>
<organism>
    <name type="scientific">Xenopus tropicalis</name>
    <name type="common">Western clawed frog</name>
    <name type="synonym">Silurana tropicalis</name>
    <dbReference type="NCBI Taxonomy" id="8364"/>
    <lineage>
        <taxon>Eukaryota</taxon>
        <taxon>Metazoa</taxon>
        <taxon>Chordata</taxon>
        <taxon>Craniata</taxon>
        <taxon>Vertebrata</taxon>
        <taxon>Euteleostomi</taxon>
        <taxon>Amphibia</taxon>
        <taxon>Batrachia</taxon>
        <taxon>Anura</taxon>
        <taxon>Pipoidea</taxon>
        <taxon>Pipidae</taxon>
        <taxon>Xenopodinae</taxon>
        <taxon>Xenopus</taxon>
        <taxon>Silurana</taxon>
    </lineage>
</organism>
<proteinExistence type="evidence at transcript level"/>
<name>FOXN2_XENTR</name>
<sequence length="334" mass="36380">MGPVTGMTPDKNIETPAAEKVPGLSQTENMGSLPEEVGAARPKASMVDSGTTDEELTNLNWLHESTNLLNNFSLGSEGVPTGSPLYDIEGDLSPSGCQTPEKLSASSKPPYSFSLLIYMAIEHSPNKCLPVKDIYSWILDRFPYFATAPTGWKNSVRHNLSLNKYFQKVERSHGKVNGKGSLWCVDPEYKPSLIQALKKQPFSSALALYTPPTSPTSVSSRSSVSSLSSVEEVYEFIPKNSRAGSDGSEGFHSEDDTDIDYEEDMLGDSGYVSQPCINPSSNDLHGNKLRKEACQDIDDELKEAAGSLLHLAGIRTCLDSLLKTAKAQSQKHRK</sequence>
<comment type="subcellular location">
    <subcellularLocation>
        <location evidence="4">Nucleus</location>
    </subcellularLocation>
</comment>
<protein>
    <recommendedName>
        <fullName>Forkhead box protein N2</fullName>
    </recommendedName>
</protein>
<reference evidence="5" key="1">
    <citation type="submission" date="2006-03" db="EMBL/GenBank/DDBJ databases">
        <authorList>
            <consortium name="Sanger Xenopus tropicalis EST/cDNA project"/>
        </authorList>
    </citation>
    <scope>NUCLEOTIDE SEQUENCE [LARGE SCALE MRNA]</scope>
    <source>
        <tissue>Gastrula</tissue>
    </source>
</reference>
<accession>Q28F43</accession>